<sequence length="164" mass="18078">MKIAVIQGPNLNMLGIREQHIYGNMSLEQIHQQLQTAAEQNGVELEFFQSNFEGEIVDRVQECLGTVDGIMINPAAYSHTSIAIKDALSAVNMPVVEVHISNIYKREEFRQKSITAAASTGVISGFGAFGYHMGLIALMQMINELKAIAQARNAQIQAQTEENK</sequence>
<evidence type="ECO:0000255" key="1">
    <source>
        <dbReference type="HAMAP-Rule" id="MF_00169"/>
    </source>
</evidence>
<organism>
    <name type="scientific">Aliarcobacter butzleri (strain RM4018)</name>
    <name type="common">Arcobacter butzleri</name>
    <dbReference type="NCBI Taxonomy" id="367737"/>
    <lineage>
        <taxon>Bacteria</taxon>
        <taxon>Pseudomonadati</taxon>
        <taxon>Campylobacterota</taxon>
        <taxon>Epsilonproteobacteria</taxon>
        <taxon>Campylobacterales</taxon>
        <taxon>Arcobacteraceae</taxon>
        <taxon>Aliarcobacter</taxon>
    </lineage>
</organism>
<name>AROQ_ALIB4</name>
<proteinExistence type="inferred from homology"/>
<feature type="chain" id="PRO_1000058292" description="3-dehydroquinate dehydratase">
    <location>
        <begin position="1"/>
        <end position="164"/>
    </location>
</feature>
<feature type="active site" description="Proton acceptor" evidence="1">
    <location>
        <position position="22"/>
    </location>
</feature>
<feature type="active site" description="Proton donor" evidence="1">
    <location>
        <position position="99"/>
    </location>
</feature>
<feature type="binding site" evidence="1">
    <location>
        <position position="73"/>
    </location>
    <ligand>
        <name>substrate</name>
    </ligand>
</feature>
<feature type="binding site" evidence="1">
    <location>
        <position position="79"/>
    </location>
    <ligand>
        <name>substrate</name>
    </ligand>
</feature>
<feature type="binding site" evidence="1">
    <location>
        <position position="86"/>
    </location>
    <ligand>
        <name>substrate</name>
    </ligand>
</feature>
<feature type="binding site" evidence="1">
    <location>
        <begin position="100"/>
        <end position="101"/>
    </location>
    <ligand>
        <name>substrate</name>
    </ligand>
</feature>
<feature type="binding site" evidence="1">
    <location>
        <position position="110"/>
    </location>
    <ligand>
        <name>substrate</name>
    </ligand>
</feature>
<feature type="site" description="Transition state stabilizer" evidence="1">
    <location>
        <position position="17"/>
    </location>
</feature>
<protein>
    <recommendedName>
        <fullName evidence="1">3-dehydroquinate dehydratase</fullName>
        <shortName evidence="1">3-dehydroquinase</shortName>
        <ecNumber evidence="1">4.2.1.10</ecNumber>
    </recommendedName>
    <alternativeName>
        <fullName evidence="1">Type II DHQase</fullName>
    </alternativeName>
</protein>
<accession>A8ES39</accession>
<dbReference type="EC" id="4.2.1.10" evidence="1"/>
<dbReference type="EMBL" id="CP000361">
    <property type="protein sequence ID" value="ABV66763.1"/>
    <property type="molecule type" value="Genomic_DNA"/>
</dbReference>
<dbReference type="RefSeq" id="WP_012012300.1">
    <property type="nucleotide sequence ID" value="NC_009850.1"/>
</dbReference>
<dbReference type="SMR" id="A8ES39"/>
<dbReference type="STRING" id="367737.Abu_0488"/>
<dbReference type="GeneID" id="24305666"/>
<dbReference type="KEGG" id="abu:Abu_0488"/>
<dbReference type="eggNOG" id="COG0757">
    <property type="taxonomic scope" value="Bacteria"/>
</dbReference>
<dbReference type="HOGENOM" id="CLU_090968_1_0_7"/>
<dbReference type="UniPathway" id="UPA00053">
    <property type="reaction ID" value="UER00086"/>
</dbReference>
<dbReference type="Proteomes" id="UP000001136">
    <property type="component" value="Chromosome"/>
</dbReference>
<dbReference type="GO" id="GO:0003855">
    <property type="term" value="F:3-dehydroquinate dehydratase activity"/>
    <property type="evidence" value="ECO:0007669"/>
    <property type="project" value="UniProtKB-UniRule"/>
</dbReference>
<dbReference type="GO" id="GO:0008652">
    <property type="term" value="P:amino acid biosynthetic process"/>
    <property type="evidence" value="ECO:0007669"/>
    <property type="project" value="UniProtKB-KW"/>
</dbReference>
<dbReference type="GO" id="GO:0009073">
    <property type="term" value="P:aromatic amino acid family biosynthetic process"/>
    <property type="evidence" value="ECO:0007669"/>
    <property type="project" value="UniProtKB-KW"/>
</dbReference>
<dbReference type="GO" id="GO:0009423">
    <property type="term" value="P:chorismate biosynthetic process"/>
    <property type="evidence" value="ECO:0007669"/>
    <property type="project" value="UniProtKB-UniRule"/>
</dbReference>
<dbReference type="GO" id="GO:0019631">
    <property type="term" value="P:quinate catabolic process"/>
    <property type="evidence" value="ECO:0007669"/>
    <property type="project" value="TreeGrafter"/>
</dbReference>
<dbReference type="CDD" id="cd00466">
    <property type="entry name" value="DHQase_II"/>
    <property type="match status" value="1"/>
</dbReference>
<dbReference type="Gene3D" id="3.40.50.9100">
    <property type="entry name" value="Dehydroquinase, class II"/>
    <property type="match status" value="1"/>
</dbReference>
<dbReference type="HAMAP" id="MF_00169">
    <property type="entry name" value="AroQ"/>
    <property type="match status" value="1"/>
</dbReference>
<dbReference type="InterPro" id="IPR001874">
    <property type="entry name" value="DHquinase_II"/>
</dbReference>
<dbReference type="InterPro" id="IPR018509">
    <property type="entry name" value="DHquinase_II_CS"/>
</dbReference>
<dbReference type="InterPro" id="IPR036441">
    <property type="entry name" value="DHquinase_II_sf"/>
</dbReference>
<dbReference type="NCBIfam" id="TIGR01088">
    <property type="entry name" value="aroQ"/>
    <property type="match status" value="1"/>
</dbReference>
<dbReference type="NCBIfam" id="NF003805">
    <property type="entry name" value="PRK05395.1-2"/>
    <property type="match status" value="1"/>
</dbReference>
<dbReference type="NCBIfam" id="NF003806">
    <property type="entry name" value="PRK05395.1-3"/>
    <property type="match status" value="1"/>
</dbReference>
<dbReference type="NCBIfam" id="NF003807">
    <property type="entry name" value="PRK05395.1-4"/>
    <property type="match status" value="1"/>
</dbReference>
<dbReference type="PANTHER" id="PTHR21272">
    <property type="entry name" value="CATABOLIC 3-DEHYDROQUINASE"/>
    <property type="match status" value="1"/>
</dbReference>
<dbReference type="PANTHER" id="PTHR21272:SF3">
    <property type="entry name" value="CATABOLIC 3-DEHYDROQUINASE"/>
    <property type="match status" value="1"/>
</dbReference>
<dbReference type="Pfam" id="PF01220">
    <property type="entry name" value="DHquinase_II"/>
    <property type="match status" value="1"/>
</dbReference>
<dbReference type="PIRSF" id="PIRSF001399">
    <property type="entry name" value="DHquinase_II"/>
    <property type="match status" value="1"/>
</dbReference>
<dbReference type="SUPFAM" id="SSF52304">
    <property type="entry name" value="Type II 3-dehydroquinate dehydratase"/>
    <property type="match status" value="1"/>
</dbReference>
<dbReference type="PROSITE" id="PS01029">
    <property type="entry name" value="DEHYDROQUINASE_II"/>
    <property type="match status" value="1"/>
</dbReference>
<reference key="1">
    <citation type="journal article" date="2007" name="PLoS ONE">
        <title>The complete genome sequence and analysis of the Epsilonproteobacterium Arcobacter butzleri.</title>
        <authorList>
            <person name="Miller W.G."/>
            <person name="Parker C.T."/>
            <person name="Rubenfield M."/>
            <person name="Mendz G.L."/>
            <person name="Woesten M.M.S.M."/>
            <person name="Ussery D.W."/>
            <person name="Stolz J.F."/>
            <person name="Binnewies T.T."/>
            <person name="Hallin P.F."/>
            <person name="Wang G."/>
            <person name="Malek J.A."/>
            <person name="Rogosin A."/>
            <person name="Stanker L.H."/>
            <person name="Mandrell R.E."/>
        </authorList>
    </citation>
    <scope>NUCLEOTIDE SEQUENCE [LARGE SCALE GENOMIC DNA]</scope>
    <source>
        <strain>RM4018</strain>
    </source>
</reference>
<keyword id="KW-0028">Amino-acid biosynthesis</keyword>
<keyword id="KW-0057">Aromatic amino acid biosynthesis</keyword>
<keyword id="KW-0456">Lyase</keyword>
<keyword id="KW-1185">Reference proteome</keyword>
<gene>
    <name evidence="1" type="primary">aroQ</name>
    <name type="ordered locus">Abu_0488</name>
</gene>
<comment type="function">
    <text evidence="1">Catalyzes a trans-dehydration via an enolate intermediate.</text>
</comment>
<comment type="catalytic activity">
    <reaction evidence="1">
        <text>3-dehydroquinate = 3-dehydroshikimate + H2O</text>
        <dbReference type="Rhea" id="RHEA:21096"/>
        <dbReference type="ChEBI" id="CHEBI:15377"/>
        <dbReference type="ChEBI" id="CHEBI:16630"/>
        <dbReference type="ChEBI" id="CHEBI:32364"/>
        <dbReference type="EC" id="4.2.1.10"/>
    </reaction>
</comment>
<comment type="pathway">
    <text evidence="1">Metabolic intermediate biosynthesis; chorismate biosynthesis; chorismate from D-erythrose 4-phosphate and phosphoenolpyruvate: step 3/7.</text>
</comment>
<comment type="subunit">
    <text evidence="1">Homododecamer.</text>
</comment>
<comment type="similarity">
    <text evidence="1">Belongs to the type-II 3-dehydroquinase family.</text>
</comment>